<comment type="function">
    <text evidence="3 15 18 21 22 23">Probable core component of the endosomal sorting required for transport complex III (ESCRT-III) which is involved in multivesicular bodies (MVBs) formation and sorting of endosomal cargo proteins into MVBs. MVBs contain intraluminal vesicles (ILVs) that are generated by invagination and scission from the limiting membrane of the endosome and mostly are delivered to lysosomes enabling degradation of membrane proteins, such as stimulated growth factor receptors, lysosomal enzymes and lipids. The MVB pathway appears to require the sequential function of ESCRT-O, -I,-II and -III complexes. ESCRT-III proteins mostly dissociate from the invaginating membrane before the ILV is released (PubMed:12860994, PubMed:18209100). The ESCRT machinery also functions in topologically equivalent membrane fission events, such as the terminal stages of cytokinesis (PubMed:21310966). Together with SPAST, the ESCRT-III complex promotes nuclear envelope sealing and mitotic spindle disassembly during late anaphase (PubMed:26040712). Plays a role in the endosomal sorting pathway. ESCRT-III proteins are believed to mediate the necessary vesicle extrusion and/or membrane fission activities, possibly in conjunction with the AAA ATPase VPS4. When overexpressed, membrane-assembled circular arrays of CHMP4B filaments can promote or stabilize negative curvature and outward budding. CHMP4A/B/C are required for the exosomal release of SDCBP, CD63 and syndecan (PubMed:22660413). Majority of the protein exists in a folded closed conformation (PubMed:33349255).</text>
</comment>
<comment type="function">
    <text evidence="4 5 6 20">(Microbial infection) The ESCRT machinery also functions in topologically equivalent membrane fission events, such as the budding of enveloped viruses (HIV-1 and other lentiviruses). Via its interaction with PDCD6IP involved in HIV-1 p6- and p9-dependent virus release.</text>
</comment>
<comment type="subunit">
    <text evidence="3 4 5 6 7 8 9 10 11 12 14 16 17 19 23">Probable core component of the endosomal sorting required for transport complex III (ESCRT-III). ESCRT-III components are thought to multimerize to form a flat lattice on the perimeter membrane of the endosome. Several assembly forms of ESCRT-III may exist that interact and act sequentially. Interacts with CHMP6 and CHMP4C. Interacts with PDCD6IP; the interaction is direct. Interacts with VPS4A; the interaction is direct. Interacts with VPS4B; the interaction is direct. Interacts with CHMP7. Interacts with CFTR; the interaction requires misfolded CFTR. Interacts with PTPN23. Interacts with CC2D1B (PubMed:33349255).</text>
</comment>
<comment type="interaction">
    <interactant intactId="EBI-749627">
        <id>Q9H444</id>
    </interactant>
    <interactant intactId="EBI-6286053">
        <id>Q5VW32</id>
        <label>BROX</label>
    </interactant>
    <organismsDiffer>false</organismsDiffer>
    <experiments>5</experiments>
</comment>
<comment type="interaction">
    <interactant intactId="EBI-749627">
        <id>Q9H444</id>
    </interactant>
    <interactant intactId="EBI-7112364">
        <id>Q6P1N0</id>
        <label>CC2D1A</label>
    </interactant>
    <organismsDiffer>false</organismsDiffer>
    <experiments>4</experiments>
</comment>
<comment type="interaction">
    <interactant intactId="EBI-749627">
        <id>Q9H444</id>
    </interactant>
    <interactant intactId="EBI-2692789">
        <id>O43633</id>
        <label>CHMP2A</label>
    </interactant>
    <organismsDiffer>false</organismsDiffer>
    <experiments>3</experiments>
</comment>
<comment type="interaction">
    <interactant intactId="EBI-749627">
        <id>Q9H444</id>
    </interactant>
    <interactant intactId="EBI-718324">
        <id>Q9UQN3</id>
        <label>CHMP2B</label>
    </interactant>
    <organismsDiffer>false</organismsDiffer>
    <experiments>2</experiments>
</comment>
<comment type="interaction">
    <interactant intactId="EBI-749627">
        <id>Q9H444</id>
    </interactant>
    <interactant intactId="EBI-2118119">
        <id>Q9Y3E7</id>
        <label>CHMP3</label>
    </interactant>
    <organismsDiffer>false</organismsDiffer>
    <experiments>5</experiments>
</comment>
<comment type="interaction">
    <interactant intactId="EBI-749627">
        <id>Q9H444</id>
    </interactant>
    <interactant intactId="EBI-747981">
        <id>Q9BY43</id>
        <label>CHMP4A</label>
    </interactant>
    <organismsDiffer>false</organismsDiffer>
    <experiments>4</experiments>
</comment>
<comment type="interaction">
    <interactant intactId="EBI-749627">
        <id>Q9H444</id>
    </interactant>
    <interactant intactId="EBI-12178895">
        <id>Q9BY43-2</id>
        <label>CHMP4A</label>
    </interactant>
    <organismsDiffer>false</organismsDiffer>
    <experiments>3</experiments>
</comment>
<comment type="interaction">
    <interactant intactId="EBI-749627">
        <id>Q9H444</id>
    </interactant>
    <interactant intactId="EBI-749627">
        <id>Q9H444</id>
        <label>CHMP4B</label>
    </interactant>
    <organismsDiffer>false</organismsDiffer>
    <experiments>7</experiments>
</comment>
<comment type="interaction">
    <interactant intactId="EBI-749627">
        <id>Q9H444</id>
    </interactant>
    <interactant intactId="EBI-751303">
        <id>Q9NZZ3</id>
        <label>CHMP5</label>
    </interactant>
    <organismsDiffer>false</organismsDiffer>
    <experiments>4</experiments>
</comment>
<comment type="interaction">
    <interactant intactId="EBI-749627">
        <id>Q9H444</id>
    </interactant>
    <interactant intactId="EBI-749253">
        <id>Q8WUX9</id>
        <label>CHMP7</label>
    </interactant>
    <organismsDiffer>false</organismsDiffer>
    <experiments>3</experiments>
</comment>
<comment type="interaction">
    <interactant intactId="EBI-749627">
        <id>Q9H444</id>
    </interactant>
    <interactant intactId="EBI-466029">
        <id>P42858</id>
        <label>HTT</label>
    </interactant>
    <organismsDiffer>false</organismsDiffer>
    <experiments>7</experiments>
</comment>
<comment type="interaction">
    <interactant intactId="EBI-749627">
        <id>Q9H444</id>
    </interactant>
    <interactant intactId="EBI-310624">
        <id>Q8WUM4</id>
        <label>PDCD6IP</label>
    </interactant>
    <organismsDiffer>false</organismsDiffer>
    <experiments>6</experiments>
</comment>
<comment type="interaction">
    <interactant intactId="EBI-749627">
        <id>Q9H444</id>
    </interactant>
    <interactant intactId="EBI-725795">
        <id>O60664</id>
        <label>PLIN3</label>
    </interactant>
    <organismsDiffer>false</organismsDiffer>
    <experiments>3</experiments>
</comment>
<comment type="interaction">
    <interactant intactId="EBI-749627">
        <id>Q9H444</id>
    </interactant>
    <interactant intactId="EBI-724478">
        <id>Q9H3S7</id>
        <label>PTPN23</label>
    </interactant>
    <organismsDiffer>false</organismsDiffer>
    <experiments>4</experiments>
</comment>
<comment type="interaction">
    <interactant intactId="EBI-749627">
        <id>Q9H444</id>
    </interactant>
    <interactant intactId="EBI-396676">
        <id>O95630</id>
        <label>STAMBP</label>
    </interactant>
    <organismsDiffer>false</organismsDiffer>
    <experiments>3</experiments>
</comment>
<comment type="interaction">
    <interactant intactId="EBI-749627">
        <id>Q9H444</id>
    </interactant>
    <interactant intactId="EBI-80168">
        <id>P63279</id>
        <label>UBE2I</label>
    </interactant>
    <organismsDiffer>false</organismsDiffer>
    <experiments>3</experiments>
</comment>
<comment type="interaction">
    <interactant intactId="EBI-749627">
        <id>Q9H444</id>
    </interactant>
    <interactant intactId="EBI-10180829">
        <id>Q7KZS0</id>
        <label>UBE2I</label>
    </interactant>
    <organismsDiffer>false</organismsDiffer>
    <experiments>3</experiments>
</comment>
<comment type="interaction">
    <interactant intactId="EBI-749627">
        <id>Q9H444</id>
    </interactant>
    <interactant intactId="EBI-15788421">
        <id>Q9WU78-1</id>
        <label>Pdcd6ip</label>
    </interactant>
    <organismsDiffer>true</organismsDiffer>
    <experiments>2</experiments>
</comment>
<comment type="subcellular location">
    <subcellularLocation>
        <location evidence="10">Cytoplasm</location>
        <location evidence="10">Cytosol</location>
    </subcellularLocation>
    <subcellularLocation>
        <location evidence="10 26">Late endosome membrane</location>
        <topology evidence="25">Peripheral membrane protein</topology>
    </subcellularLocation>
    <subcellularLocation>
        <location evidence="18 20">Midbody</location>
    </subcellularLocation>
    <subcellularLocation>
        <location evidence="22">Nucleus envelope</location>
    </subcellularLocation>
    <text evidence="20 22">Recruited to the nuclear envelope by CHMP7 during late anaphase (PubMed:26040712). Localizes transiently to the midbody arms immediately before abscission (PubMed:22422861).</text>
</comment>
<comment type="tissue specificity">
    <text evidence="8">Widely expressed. Expressed at higher level in heart and skeletal muscle. Also expressed in brain, colon, thymus, spleen, kidney, liver, small intestine, placenta, lung and peripheral blood lymphocytes.</text>
</comment>
<comment type="domain">
    <text>The acidic C-terminus and the basic N-termminus are thought to render the protein in a closed, soluble and inactive conformation through an autoinhibitory intramolecular interaction. The open and active conformation, which enables membrane binding and oligomerization, is achieved by interaction with other cellular binding partners, probably including other ESCRT components.</text>
</comment>
<comment type="PTM">
    <text evidence="19">ISGylated. Isgylation weakens its interaction with VPS4A.</text>
</comment>
<comment type="disease" evidence="13">
    <disease id="DI-02183">
        <name>Cataract 31, multiple types</name>
        <acronym>CTRCT31</acronym>
        <description>An opacification of the crystalline lens of the eye that frequently results in visual impairment or blindness. Opacities vary in morphology, are often confined to a portion of the lens, and may be static or progressive. In general, the more posteriorly located and dense an opacity, the greater the impact on visual function. CTRCT31 includes posterior polar, progressive posterior subcapsular, nuclear, and anterior subcapsular cataracts.</description>
        <dbReference type="MIM" id="605387"/>
    </disease>
    <text>The disease is caused by variants affecting the gene represented in this entry.</text>
</comment>
<comment type="miscellaneous">
    <text>Its overexpression strongly inhibits HIV-1 release.</text>
</comment>
<comment type="similarity">
    <text evidence="25">Belongs to the SNF7 family.</text>
</comment>
<proteinExistence type="evidence at protein level"/>
<reference key="1">
    <citation type="journal article" date="2003" name="J. Biol. Chem.">
        <title>The ALG-2-interacting protein Alix associates with CHMP4b, a human homologue of yeast Snf7 that is involved in multivesicular body sorting.</title>
        <authorList>
            <person name="Katoh K."/>
            <person name="Shibata H."/>
            <person name="Suzuki H."/>
            <person name="Narai A."/>
            <person name="Ishidoh K."/>
            <person name="Kominami E."/>
            <person name="Yoshimori T."/>
            <person name="Maki M."/>
        </authorList>
    </citation>
    <scope>NUCLEOTIDE SEQUENCE [MRNA]</scope>
    <scope>FUNCTION</scope>
    <scope>SUBCELLULAR LOCATION</scope>
    <scope>INTERACTION WITH PDCD6IP</scope>
</reference>
<reference key="2">
    <citation type="journal article" date="2004" name="Biochem. J.">
        <title>Structure and function of human Vps20 and Snf7 proteins.</title>
        <authorList>
            <person name="Peck J.W."/>
            <person name="Bowden E.T."/>
            <person name="Burbelo P.D."/>
        </authorList>
    </citation>
    <scope>NUCLEOTIDE SEQUENCE [MRNA]</scope>
    <scope>INTERACTION WITH PDCD6IP</scope>
</reference>
<reference key="3">
    <citation type="journal article" date="2001" name="Nature">
        <title>The DNA sequence and comparative analysis of human chromosome 20.</title>
        <authorList>
            <person name="Deloukas P."/>
            <person name="Matthews L.H."/>
            <person name="Ashurst J.L."/>
            <person name="Burton J."/>
            <person name="Gilbert J.G.R."/>
            <person name="Jones M."/>
            <person name="Stavrides G."/>
            <person name="Almeida J.P."/>
            <person name="Babbage A.K."/>
            <person name="Bagguley C.L."/>
            <person name="Bailey J."/>
            <person name="Barlow K.F."/>
            <person name="Bates K.N."/>
            <person name="Beard L.M."/>
            <person name="Beare D.M."/>
            <person name="Beasley O.P."/>
            <person name="Bird C.P."/>
            <person name="Blakey S.E."/>
            <person name="Bridgeman A.M."/>
            <person name="Brown A.J."/>
            <person name="Buck D."/>
            <person name="Burrill W.D."/>
            <person name="Butler A.P."/>
            <person name="Carder C."/>
            <person name="Carter N.P."/>
            <person name="Chapman J.C."/>
            <person name="Clamp M."/>
            <person name="Clark G."/>
            <person name="Clark L.N."/>
            <person name="Clark S.Y."/>
            <person name="Clee C.M."/>
            <person name="Clegg S."/>
            <person name="Cobley V.E."/>
            <person name="Collier R.E."/>
            <person name="Connor R.E."/>
            <person name="Corby N.R."/>
            <person name="Coulson A."/>
            <person name="Coville G.J."/>
            <person name="Deadman R."/>
            <person name="Dhami P.D."/>
            <person name="Dunn M."/>
            <person name="Ellington A.G."/>
            <person name="Frankland J.A."/>
            <person name="Fraser A."/>
            <person name="French L."/>
            <person name="Garner P."/>
            <person name="Grafham D.V."/>
            <person name="Griffiths C."/>
            <person name="Griffiths M.N.D."/>
            <person name="Gwilliam R."/>
            <person name="Hall R.E."/>
            <person name="Hammond S."/>
            <person name="Harley J.L."/>
            <person name="Heath P.D."/>
            <person name="Ho S."/>
            <person name="Holden J.L."/>
            <person name="Howden P.J."/>
            <person name="Huckle E."/>
            <person name="Hunt A.R."/>
            <person name="Hunt S.E."/>
            <person name="Jekosch K."/>
            <person name="Johnson C.M."/>
            <person name="Johnson D."/>
            <person name="Kay M.P."/>
            <person name="Kimberley A.M."/>
            <person name="King A."/>
            <person name="Knights A."/>
            <person name="Laird G.K."/>
            <person name="Lawlor S."/>
            <person name="Lehvaeslaiho M.H."/>
            <person name="Leversha M.A."/>
            <person name="Lloyd C."/>
            <person name="Lloyd D.M."/>
            <person name="Lovell J.D."/>
            <person name="Marsh V.L."/>
            <person name="Martin S.L."/>
            <person name="McConnachie L.J."/>
            <person name="McLay K."/>
            <person name="McMurray A.A."/>
            <person name="Milne S.A."/>
            <person name="Mistry D."/>
            <person name="Moore M.J.F."/>
            <person name="Mullikin J.C."/>
            <person name="Nickerson T."/>
            <person name="Oliver K."/>
            <person name="Parker A."/>
            <person name="Patel R."/>
            <person name="Pearce T.A.V."/>
            <person name="Peck A.I."/>
            <person name="Phillimore B.J.C.T."/>
            <person name="Prathalingam S.R."/>
            <person name="Plumb R.W."/>
            <person name="Ramsay H."/>
            <person name="Rice C.M."/>
            <person name="Ross M.T."/>
            <person name="Scott C.E."/>
            <person name="Sehra H.K."/>
            <person name="Shownkeen R."/>
            <person name="Sims S."/>
            <person name="Skuce C.D."/>
            <person name="Smith M.L."/>
            <person name="Soderlund C."/>
            <person name="Steward C.A."/>
            <person name="Sulston J.E."/>
            <person name="Swann R.M."/>
            <person name="Sycamore N."/>
            <person name="Taylor R."/>
            <person name="Tee L."/>
            <person name="Thomas D.W."/>
            <person name="Thorpe A."/>
            <person name="Tracey A."/>
            <person name="Tromans A.C."/>
            <person name="Vaudin M."/>
            <person name="Wall M."/>
            <person name="Wallis J.M."/>
            <person name="Whitehead S.L."/>
            <person name="Whittaker P."/>
            <person name="Willey D.L."/>
            <person name="Williams L."/>
            <person name="Williams S.A."/>
            <person name="Wilming L."/>
            <person name="Wray P.W."/>
            <person name="Hubbard T."/>
            <person name="Durbin R.M."/>
            <person name="Bentley D.R."/>
            <person name="Beck S."/>
            <person name="Rogers J."/>
        </authorList>
    </citation>
    <scope>NUCLEOTIDE SEQUENCE [LARGE SCALE GENOMIC DNA]</scope>
</reference>
<reference key="4">
    <citation type="submission" date="2005-09" db="EMBL/GenBank/DDBJ databases">
        <authorList>
            <person name="Mural R.J."/>
            <person name="Istrail S."/>
            <person name="Sutton G.G."/>
            <person name="Florea L."/>
            <person name="Halpern A.L."/>
            <person name="Mobarry C.M."/>
            <person name="Lippert R."/>
            <person name="Walenz B."/>
            <person name="Shatkay H."/>
            <person name="Dew I."/>
            <person name="Miller J.R."/>
            <person name="Flanigan M.J."/>
            <person name="Edwards N.J."/>
            <person name="Bolanos R."/>
            <person name="Fasulo D."/>
            <person name="Halldorsson B.V."/>
            <person name="Hannenhalli S."/>
            <person name="Turner R."/>
            <person name="Yooseph S."/>
            <person name="Lu F."/>
            <person name="Nusskern D.R."/>
            <person name="Shue B.C."/>
            <person name="Zheng X.H."/>
            <person name="Zhong F."/>
            <person name="Delcher A.L."/>
            <person name="Huson D.H."/>
            <person name="Kravitz S.A."/>
            <person name="Mouchard L."/>
            <person name="Reinert K."/>
            <person name="Remington K.A."/>
            <person name="Clark A.G."/>
            <person name="Waterman M.S."/>
            <person name="Eichler E.E."/>
            <person name="Adams M.D."/>
            <person name="Hunkapiller M.W."/>
            <person name="Myers E.W."/>
            <person name="Venter J.C."/>
        </authorList>
    </citation>
    <scope>NUCLEOTIDE SEQUENCE [LARGE SCALE GENOMIC DNA]</scope>
</reference>
<reference key="5">
    <citation type="journal article" date="2004" name="Genome Res.">
        <title>The status, quality, and expansion of the NIH full-length cDNA project: the Mammalian Gene Collection (MGC).</title>
        <authorList>
            <consortium name="The MGC Project Team"/>
        </authorList>
    </citation>
    <scope>NUCLEOTIDE SEQUENCE [LARGE SCALE MRNA]</scope>
    <source>
        <tissue>Brain</tissue>
        <tissue>Lung</tissue>
        <tissue>Testis</tissue>
    </source>
</reference>
<reference key="6">
    <citation type="submission" date="2009-10" db="UniProtKB">
        <authorList>
            <person name="Bienvenut W.V."/>
            <person name="Lempens A."/>
            <person name="Norman J.C."/>
        </authorList>
    </citation>
    <scope>PROTEIN SEQUENCE OF 2-28</scope>
    <scope>CLEAVAGE OF INITIATOR METHIONINE</scope>
    <scope>ACETYLATION AT SER-2</scope>
    <scope>IDENTIFICATION BY MASS SPECTROMETRY</scope>
    <source>
        <tissue>Ovarian carcinoma</tissue>
    </source>
</reference>
<reference key="7">
    <citation type="submission" date="2008-12" db="UniProtKB">
        <authorList>
            <person name="Lubec G."/>
            <person name="Chen W.-Q."/>
            <person name="Sun Y."/>
        </authorList>
    </citation>
    <scope>PROTEIN SEQUENCE OF 18-28 AND 78-107</scope>
    <scope>IDENTIFICATION BY MASS SPECTROMETRY</scope>
    <source>
        <tissue>Fetal brain cortex</tissue>
    </source>
</reference>
<reference key="8">
    <citation type="journal article" date="2003" name="Cell">
        <title>AIP1/ALIX is a binding partner for HIV-1 p6 and EIAV p9 functioning in virus budding.</title>
        <authorList>
            <person name="Strack B."/>
            <person name="Calistri A."/>
            <person name="Craig S."/>
            <person name="Popova E."/>
            <person name="Goettlinger H.G."/>
        </authorList>
    </citation>
    <scope>FUNCTION (MICROBIAL INFECTION)</scope>
    <scope>INTERACTION WITH PDCD6IP</scope>
</reference>
<reference key="9">
    <citation type="journal article" date="2003" name="Cell">
        <title>The protein network of HIV budding.</title>
        <authorList>
            <person name="von Schwedler U.K."/>
            <person name="Stuchell M."/>
            <person name="Mueller B."/>
            <person name="Ward D.M."/>
            <person name="Chung H.-Y."/>
            <person name="Morita E."/>
            <person name="Wang H.E."/>
            <person name="Davis T."/>
            <person name="He G.P."/>
            <person name="Cimbora D.M."/>
            <person name="Scott A."/>
            <person name="Kraeusslich H.-G."/>
            <person name="Kaplan J."/>
            <person name="Morham S.G."/>
            <person name="Sundquist W.I."/>
        </authorList>
    </citation>
    <scope>FUNCTION (MICROBIAL INFECTION)</scope>
    <scope>INTERACTION WITH CHMP6; CHMP4C; PDCD6IP; VPS4A AND VPS4B</scope>
</reference>
<reference key="10">
    <citation type="journal article" date="2003" name="Proc. Natl. Acad. Sci. U.S.A.">
        <title>Divergent retroviral late-budding domains recruit vacuolar protein sorting factors by using alternative adaptor proteins.</title>
        <authorList>
            <person name="Martin-Serrano J."/>
            <person name="Yarovoy A."/>
            <person name="Perez-Caballero D."/>
            <person name="Bieniasz P.D."/>
        </authorList>
    </citation>
    <scope>FUNCTION (MICROBIAL INFECTION)</scope>
    <scope>SELF-ASSOCIATION</scope>
    <scope>INTERACTION WITH CHMP2A; CHMP4A; CHMP4C; CHMP6; PDCD6IP AND VPS4A</scope>
</reference>
<reference key="11">
    <citation type="journal article" date="2003" name="Proc. Natl. Acad. Sci. U.S.A.">
        <authorList>
            <person name="Martin-Serrano J."/>
            <person name="Yarovoy A."/>
            <person name="Perez-Caballero D."/>
            <person name="Bieniasz P.D."/>
        </authorList>
    </citation>
    <scope>ERRATUM OF PUBMED:14519844</scope>
</reference>
<reference key="12">
    <citation type="journal article" date="2004" name="Arch. Biochem. Biophys.">
        <title>CHMP4b is a major binding partner of the ALG-2-interacting protein Alix among the three CHMP4 isoforms.</title>
        <authorList>
            <person name="Katoh K."/>
            <person name="Shibata H."/>
            <person name="Hatta K."/>
            <person name="Maki M."/>
        </authorList>
    </citation>
    <scope>TISSUE SPECIFICITY</scope>
    <scope>INTERACTION WITH PDCD6IP</scope>
</reference>
<reference key="13">
    <citation type="journal article" date="2005" name="Biochem. J.">
        <title>Human CHMP6, a myristoylated ESCRT-III protein, interacts directly with an ESCRT-II component EAP20 and regulates endosomal cargo sorting.</title>
        <authorList>
            <person name="Yorikawa C."/>
            <person name="Shibata H."/>
            <person name="Waguri S."/>
            <person name="Hatta K."/>
            <person name="Horii M."/>
            <person name="Katoh K."/>
            <person name="Kobayashi T."/>
            <person name="Uchiyama Y."/>
            <person name="Maki M."/>
        </authorList>
    </citation>
    <scope>SUBCELLULAR LOCATION</scope>
    <scope>INTERACTION WITH CHMP6</scope>
</reference>
<reference key="14">
    <citation type="journal article" date="2004" name="J. Cell Biol.">
        <title>Misfolding diverts CFTR from recycling to degradation: quality control at early endosomes.</title>
        <authorList>
            <person name="Sharma M."/>
            <person name="Pampinella F."/>
            <person name="Nemes C."/>
            <person name="Benharouga M."/>
            <person name="So J."/>
            <person name="Du K."/>
            <person name="Bache K.G."/>
            <person name="Papsin B."/>
            <person name="Zerangue N."/>
            <person name="Stenmark H."/>
            <person name="Lukacs G.L."/>
        </authorList>
    </citation>
    <scope>INTERACTION WITH MISFOLDED CFTR</scope>
</reference>
<reference key="15">
    <citation type="journal article" date="2006" name="Biochem. J.">
        <title>CHMP7, a novel ESCRT-III-related protein, associates with CHMP4b and functions in the endosomal sorting pathway.</title>
        <authorList>
            <person name="Horii M."/>
            <person name="Shibata H."/>
            <person name="Kobayashi R."/>
            <person name="Katoh K."/>
            <person name="Yorikawa C."/>
            <person name="Yasuda J."/>
            <person name="Maki M."/>
        </authorList>
    </citation>
    <scope>INTERACTION WITH CHMP7</scope>
</reference>
<reference key="16">
    <citation type="journal article" date="2006" name="Proc. Natl. Acad. Sci. U.S.A.">
        <title>Release of autoinhibition converts ESCRT-III components into potent inhibitors of HIV-1 budding.</title>
        <authorList>
            <person name="Zamborlini A."/>
            <person name="Usami Y."/>
            <person name="Radoshitzky S.R."/>
            <person name="Popova E."/>
            <person name="Palu G."/>
            <person name="Goettlinger H."/>
        </authorList>
    </citation>
    <scope>AUTOINHIBITORY MECHANISM</scope>
    <scope>INTRAMOLECULAR INTERACTION</scope>
</reference>
<reference key="17">
    <citation type="journal article" date="2007" name="J. Virol.">
        <title>Potent rescue of human immunodeficiency virus type 1 late domain mutants by ALIX/AIP1 depends on its CHMP4 binding site.</title>
        <authorList>
            <person name="Usami Y."/>
            <person name="Popov S."/>
            <person name="Goettlinger H.G."/>
        </authorList>
    </citation>
    <scope>INTERACTION WITH PDCD6IP</scope>
</reference>
<reference key="18">
    <citation type="journal article" date="2008" name="FEBS J.">
        <title>Brox, a novel farnesylated Bro1 domain-containing protein that associates with charged multivesicular body protein 4 (CHMP4).</title>
        <authorList>
            <person name="Ichioka F."/>
            <person name="Kobayashi R."/>
            <person name="Katoh K."/>
            <person name="Shibata H."/>
            <person name="Maki M."/>
        </authorList>
    </citation>
    <scope>INTERACTION WITH BROX</scope>
</reference>
<reference key="19">
    <citation type="journal article" date="2008" name="J. Cell Biol.">
        <title>Plasma membrane deformation by circular arrays of ESCRT-III protein filaments.</title>
        <authorList>
            <person name="Hanson P.I."/>
            <person name="Roth R."/>
            <person name="Lin Y."/>
            <person name="Heuser J.E."/>
        </authorList>
    </citation>
    <scope>FUNCTION</scope>
    <scope>SELF-ASSOCIATION</scope>
    <scope>STRUCTURE BY ELECTRON MICROSCOPY</scope>
</reference>
<reference key="20">
    <citation type="journal article" date="2008" name="Proc. Natl. Acad. Sci. U.S.A.">
        <title>The Bro1-related protein HD-PTP/PTPN23 is required for endosomal cargo sorting and multivesicular body morphogenesis.</title>
        <authorList>
            <person name="Doyotte A."/>
            <person name="Mironov A."/>
            <person name="McKenzie E."/>
            <person name="Woodman P."/>
        </authorList>
    </citation>
    <scope>INTERACTION WITH PTPN23</scope>
</reference>
<reference key="21">
    <citation type="journal article" date="2009" name="Science">
        <title>Lysine acetylation targets protein complexes and co-regulates major cellular functions.</title>
        <authorList>
            <person name="Choudhary C."/>
            <person name="Kumar C."/>
            <person name="Gnad F."/>
            <person name="Nielsen M.L."/>
            <person name="Rehman M."/>
            <person name="Walther T.C."/>
            <person name="Olsen J.V."/>
            <person name="Mann M."/>
        </authorList>
    </citation>
    <scope>ACETYLATION [LARGE SCALE ANALYSIS] AT LYS-6 AND LYS-114</scope>
    <scope>IDENTIFICATION BY MASS SPECTROMETRY [LARGE SCALE ANALYSIS]</scope>
</reference>
<reference key="22">
    <citation type="journal article" date="2010" name="Sci. Signal.">
        <title>Quantitative phosphoproteomics reveals widespread full phosphorylation site occupancy during mitosis.</title>
        <authorList>
            <person name="Olsen J.V."/>
            <person name="Vermeulen M."/>
            <person name="Santamaria A."/>
            <person name="Kumar C."/>
            <person name="Miller M.L."/>
            <person name="Jensen L.J."/>
            <person name="Gnad F."/>
            <person name="Cox J."/>
            <person name="Jensen T.S."/>
            <person name="Nigg E.A."/>
            <person name="Brunak S."/>
            <person name="Mann M."/>
        </authorList>
    </citation>
    <scope>PHOSPHORYLATION [LARGE SCALE ANALYSIS] AT SER-184 AND SER-223</scope>
    <scope>IDENTIFICATION BY MASS SPECTROMETRY [LARGE SCALE ANALYSIS]</scope>
    <source>
        <tissue>Cervix carcinoma</tissue>
    </source>
</reference>
<reference key="23">
    <citation type="journal article" date="2011" name="BMC Syst. Biol.">
        <title>Initial characterization of the human central proteome.</title>
        <authorList>
            <person name="Burkard T.R."/>
            <person name="Planyavsky M."/>
            <person name="Kaupe I."/>
            <person name="Breitwieser F.P."/>
            <person name="Buerckstuemmer T."/>
            <person name="Bennett K.L."/>
            <person name="Superti-Furga G."/>
            <person name="Colinge J."/>
        </authorList>
    </citation>
    <scope>IDENTIFICATION BY MASS SPECTROMETRY [LARGE SCALE ANALYSIS]</scope>
</reference>
<reference key="24">
    <citation type="journal article" date="2011" name="J. Virol.">
        <title>Mechanism of inhibition of retrovirus release from cells by interferon-induced gene ISG15.</title>
        <authorList>
            <person name="Kuang Z."/>
            <person name="Seo E.J."/>
            <person name="Leis J."/>
        </authorList>
    </citation>
    <scope>ISGYLATION</scope>
    <scope>INTERACTION WITH VPS4A</scope>
</reference>
<reference key="25">
    <citation type="journal article" date="2011" name="Sci. Signal.">
        <title>System-wide temporal characterization of the proteome and phosphoproteome of human embryonic stem cell differentiation.</title>
        <authorList>
            <person name="Rigbolt K.T."/>
            <person name="Prokhorova T.A."/>
            <person name="Akimov V."/>
            <person name="Henningsen J."/>
            <person name="Johansen P.T."/>
            <person name="Kratchmarova I."/>
            <person name="Kassem M."/>
            <person name="Mann M."/>
            <person name="Olsen J.V."/>
            <person name="Blagoev B."/>
        </authorList>
    </citation>
    <scope>PHOSPHORYLATION [LARGE SCALE ANALYSIS] AT SER-223</scope>
    <scope>IDENTIFICATION BY MASS SPECTROMETRY [LARGE SCALE ANALYSIS]</scope>
</reference>
<reference key="26">
    <citation type="journal article" date="2011" name="Science">
        <title>Cortical constriction during abscission involves helices of ESCRT-III-dependent filaments.</title>
        <authorList>
            <person name="Guizetti J."/>
            <person name="Schermelleh L."/>
            <person name="Maentler J."/>
            <person name="Maar S."/>
            <person name="Poser I."/>
            <person name="Leonhardt H."/>
            <person name="Mueller-Reichert T."/>
            <person name="Gerlich D.W."/>
        </authorList>
    </citation>
    <scope>FUNCTION</scope>
    <scope>SUBCELLULAR LOCATION</scope>
</reference>
<reference key="27">
    <citation type="journal article" date="2012" name="Nat. Cell Biol.">
        <title>Syndecan-syntenin-ALIX regulates the biogenesis of exosomes.</title>
        <authorList>
            <person name="Baietti M.F."/>
            <person name="Zhang Z."/>
            <person name="Mortier E."/>
            <person name="Melchior A."/>
            <person name="Degeest G."/>
            <person name="Geeraerts A."/>
            <person name="Ivarsson Y."/>
            <person name="Depoortere F."/>
            <person name="Coomans C."/>
            <person name="Vermeiren E."/>
            <person name="Zimmermann P."/>
            <person name="David G."/>
        </authorList>
    </citation>
    <scope>FUNCTION</scope>
</reference>
<reference key="28">
    <citation type="journal article" date="2012" name="Proc. Natl. Acad. Sci. U.S.A.">
        <title>N-terminal acetylome analyses and functional insights of the N-terminal acetyltransferase NatB.</title>
        <authorList>
            <person name="Van Damme P."/>
            <person name="Lasa M."/>
            <person name="Polevoda B."/>
            <person name="Gazquez C."/>
            <person name="Elosegui-Artola A."/>
            <person name="Kim D.S."/>
            <person name="De Juan-Pardo E."/>
            <person name="Demeyer K."/>
            <person name="Hole K."/>
            <person name="Larrea E."/>
            <person name="Timmerman E."/>
            <person name="Prieto J."/>
            <person name="Arnesen T."/>
            <person name="Sherman F."/>
            <person name="Gevaert K."/>
            <person name="Aldabe R."/>
        </authorList>
    </citation>
    <scope>ACETYLATION [LARGE SCALE ANALYSIS] AT SER-2</scope>
    <scope>CLEAVAGE OF INITIATOR METHIONINE [LARGE SCALE ANALYSIS]</scope>
    <scope>IDENTIFICATION BY MASS SPECTROMETRY [LARGE SCALE ANALYSIS]</scope>
</reference>
<reference key="29">
    <citation type="journal article" date="2012" name="Science">
        <title>ESCRT-III governs the Aurora B-mediated abscission checkpoint through CHMP4C.</title>
        <authorList>
            <person name="Carlton J.G."/>
            <person name="Caballe A."/>
            <person name="Agromayor M."/>
            <person name="Kloc M."/>
            <person name="Martin-Serrano J."/>
        </authorList>
    </citation>
    <scope>FUNCTION</scope>
    <scope>SUBCELLULAR LOCATION</scope>
</reference>
<reference key="30">
    <citation type="journal article" date="2014" name="J. Proteomics">
        <title>An enzyme assisted RP-RPLC approach for in-depth analysis of human liver phosphoproteome.</title>
        <authorList>
            <person name="Bian Y."/>
            <person name="Song C."/>
            <person name="Cheng K."/>
            <person name="Dong M."/>
            <person name="Wang F."/>
            <person name="Huang J."/>
            <person name="Sun D."/>
            <person name="Wang L."/>
            <person name="Ye M."/>
            <person name="Zou H."/>
        </authorList>
    </citation>
    <scope>IDENTIFICATION BY MASS SPECTROMETRY [LARGE SCALE ANALYSIS]</scope>
    <source>
        <tissue>Liver</tissue>
    </source>
</reference>
<reference key="31">
    <citation type="journal article" date="2015" name="Nature">
        <title>Spastin and ESCRT-III coordinate mitotic spindle disassembly and nuclear envelope sealing.</title>
        <authorList>
            <person name="Vietri M."/>
            <person name="Schink K.O."/>
            <person name="Campsteijn C."/>
            <person name="Wegner C.S."/>
            <person name="Schultz S.W."/>
            <person name="Christ L."/>
            <person name="Thoresen S.B."/>
            <person name="Brech A."/>
            <person name="Raiborg C."/>
            <person name="Stenmark H."/>
        </authorList>
    </citation>
    <scope>FUNCTION</scope>
    <scope>SUBCELLULAR LOCATION</scope>
</reference>
<reference key="32">
    <citation type="journal article" date="2020" name="BMC Biol.">
        <title>Lethal (2) giant discs (Lgd)/CC2D1 is required for the full activity of the ESCRT machinery.</title>
        <authorList>
            <person name="Baeumers M."/>
            <person name="Ruhnau K."/>
            <person name="Breuer T."/>
            <person name="Pannen H."/>
            <person name="Goerlich B."/>
            <person name="Kniebel A."/>
            <person name="Haensch S."/>
            <person name="Weidtkamp-Peters S."/>
            <person name="Schmitt L."/>
            <person name="Klein T."/>
        </authorList>
    </citation>
    <scope>INTERACTION WITH CC2D1B</scope>
    <scope>MUTAGENESIS OF ALA-54 AND LEU-180</scope>
</reference>
<reference key="33">
    <citation type="journal article" date="2008" name="Proc. Natl. Acad. Sci. U.S.A.">
        <title>ALIX-CHMP4 interactions in the human ESCRT pathway.</title>
        <authorList>
            <person name="McCullough J."/>
            <person name="Fisher R.D."/>
            <person name="Whitby F.G."/>
            <person name="Sundquist W.I."/>
            <person name="Hill C.P."/>
        </authorList>
    </citation>
    <scope>X-RAY CRYSTALLOGRAPHY (2.1 ANGSTROMS) OF 207-224 IN COMPLEX WITH PDCD6IP</scope>
</reference>
<reference key="34">
    <citation type="journal article" date="2007" name="Am. J. Hum. Genet.">
        <title>CHMP4B, a novel gene for autosomal dominant cataracts linked to chromosome 20q.</title>
        <authorList>
            <person name="Shiels A."/>
            <person name="Bennett T.M."/>
            <person name="Knopf H.L.S."/>
            <person name="Yamada K."/>
            <person name="Yoshiura K."/>
            <person name="Niikawa N."/>
            <person name="Shim S."/>
            <person name="Hanson P.I."/>
        </authorList>
    </citation>
    <scope>VARIANTS CTRCT31 VAL-129 AND LYS-161</scope>
</reference>
<sequence>MSVFGKLFGAGGGKAGKGGPTPQEAIQRLRDTEEMLSKKQEFLEKKIEQELTAAKKHGTKNKRAALQALKRKKRYEKQLAQIDGTLSTIEFQREALENANTNTEVLKNMGYAAKAMKAAHDNMDIDKVDELMQDIADQQELAEEISTAISKPVGFGEEFDEDELMAELEELEQEELDKNLLEISGPETVPLPNVPSIALPSKPAKKKEEEDDDMKELENWAGSM</sequence>
<name>CHM4B_HUMAN</name>
<accession>Q9H444</accession>
<accession>E1P5N4</accession>
<accession>Q53ZD6</accession>
<organism>
    <name type="scientific">Homo sapiens</name>
    <name type="common">Human</name>
    <dbReference type="NCBI Taxonomy" id="9606"/>
    <lineage>
        <taxon>Eukaryota</taxon>
        <taxon>Metazoa</taxon>
        <taxon>Chordata</taxon>
        <taxon>Craniata</taxon>
        <taxon>Vertebrata</taxon>
        <taxon>Euteleostomi</taxon>
        <taxon>Mammalia</taxon>
        <taxon>Eutheria</taxon>
        <taxon>Euarchontoglires</taxon>
        <taxon>Primates</taxon>
        <taxon>Haplorrhini</taxon>
        <taxon>Catarrhini</taxon>
        <taxon>Hominidae</taxon>
        <taxon>Homo</taxon>
    </lineage>
</organism>
<gene>
    <name type="primary">CHMP4B</name>
    <name type="synonym">C20orf178</name>
    <name type="synonym">SHAX1</name>
</gene>
<feature type="initiator methionine" description="Removed" evidence="24 30">
    <location>
        <position position="1"/>
    </location>
</feature>
<feature type="chain" id="PRO_0000211489" description="Charged multivesicular body protein 4b">
    <location>
        <begin position="2"/>
        <end position="224"/>
    </location>
</feature>
<feature type="region of interest" description="Disordered" evidence="2">
    <location>
        <begin position="1"/>
        <end position="23"/>
    </location>
</feature>
<feature type="region of interest" description="Disordered" evidence="2">
    <location>
        <begin position="185"/>
        <end position="224"/>
    </location>
</feature>
<feature type="coiled-coil region" evidence="1">
    <location>
        <begin position="23"/>
        <end position="183"/>
    </location>
</feature>
<feature type="compositionally biased region" description="Gly residues" evidence="2">
    <location>
        <begin position="8"/>
        <end position="19"/>
    </location>
</feature>
<feature type="modified residue" description="N-acetylserine" evidence="24 30">
    <location>
        <position position="2"/>
    </location>
</feature>
<feature type="modified residue" description="N6-acetyllysine" evidence="27">
    <location>
        <position position="6"/>
    </location>
</feature>
<feature type="modified residue" description="N6-acetyllysine" evidence="27">
    <location>
        <position position="114"/>
    </location>
</feature>
<feature type="modified residue" description="Phosphoserine" evidence="28">
    <location>
        <position position="184"/>
    </location>
</feature>
<feature type="modified residue" description="Phosphoserine" evidence="28 29">
    <location>
        <position position="223"/>
    </location>
</feature>
<feature type="sequence variant" id="VAR_037579" description="In CTRCT31; dbSNP:rs118203965." evidence="13">
    <original>D</original>
    <variation>V</variation>
    <location>
        <position position="129"/>
    </location>
</feature>
<feature type="sequence variant" id="VAR_037580" description="In CTRCT31; dbSNP:rs118203966." evidence="13">
    <original>E</original>
    <variation>K</variation>
    <location>
        <position position="161"/>
    </location>
</feature>
<feature type="mutagenesis site" description="No loss of interaction with CC2D1B and forms a disulfide bond locking the protein in its folded closed conformation when exposed to oxidizing conditions; when associated with C-180." evidence="23">
    <original>A</original>
    <variation>C</variation>
    <location>
        <position position="54"/>
    </location>
</feature>
<feature type="mutagenesis site" description="No loss of interaction with CC2D1B and forms a disulfide bond locking the protein in its folded closed conformation when exposed to oxidizing conditions; when associated with C-54." evidence="23">
    <original>L</original>
    <variation>C</variation>
    <location>
        <position position="180"/>
    </location>
</feature>
<feature type="helix" evidence="32">
    <location>
        <begin position="23"/>
        <end position="57"/>
    </location>
</feature>
<feature type="helix" evidence="32">
    <location>
        <begin position="62"/>
        <end position="96"/>
    </location>
</feature>
<feature type="helix" evidence="31">
    <location>
        <begin position="209"/>
        <end position="212"/>
    </location>
</feature>
<feature type="helix" evidence="33">
    <location>
        <begin position="213"/>
        <end position="221"/>
    </location>
</feature>
<evidence type="ECO:0000255" key="1"/>
<evidence type="ECO:0000256" key="2">
    <source>
        <dbReference type="SAM" id="MobiDB-lite"/>
    </source>
</evidence>
<evidence type="ECO:0000269" key="3">
    <source>
    </source>
</evidence>
<evidence type="ECO:0000269" key="4">
    <source>
    </source>
</evidence>
<evidence type="ECO:0000269" key="5">
    <source>
    </source>
</evidence>
<evidence type="ECO:0000269" key="6">
    <source>
    </source>
</evidence>
<evidence type="ECO:0000269" key="7">
    <source>
    </source>
</evidence>
<evidence type="ECO:0000269" key="8">
    <source>
    </source>
</evidence>
<evidence type="ECO:0000269" key="9">
    <source>
    </source>
</evidence>
<evidence type="ECO:0000269" key="10">
    <source>
    </source>
</evidence>
<evidence type="ECO:0000269" key="11">
    <source>
    </source>
</evidence>
<evidence type="ECO:0000269" key="12">
    <source>
    </source>
</evidence>
<evidence type="ECO:0000269" key="13">
    <source>
    </source>
</evidence>
<evidence type="ECO:0000269" key="14">
    <source>
    </source>
</evidence>
<evidence type="ECO:0000269" key="15">
    <source>
    </source>
</evidence>
<evidence type="ECO:0000269" key="16">
    <source>
    </source>
</evidence>
<evidence type="ECO:0000269" key="17">
    <source>
    </source>
</evidence>
<evidence type="ECO:0000269" key="18">
    <source>
    </source>
</evidence>
<evidence type="ECO:0000269" key="19">
    <source>
    </source>
</evidence>
<evidence type="ECO:0000269" key="20">
    <source>
    </source>
</evidence>
<evidence type="ECO:0000269" key="21">
    <source>
    </source>
</evidence>
<evidence type="ECO:0000269" key="22">
    <source>
    </source>
</evidence>
<evidence type="ECO:0000269" key="23">
    <source>
    </source>
</evidence>
<evidence type="ECO:0000269" key="24">
    <source ref="6"/>
</evidence>
<evidence type="ECO:0000305" key="25"/>
<evidence type="ECO:0000305" key="26">
    <source>
    </source>
</evidence>
<evidence type="ECO:0007744" key="27">
    <source>
    </source>
</evidence>
<evidence type="ECO:0007744" key="28">
    <source>
    </source>
</evidence>
<evidence type="ECO:0007744" key="29">
    <source>
    </source>
</evidence>
<evidence type="ECO:0007744" key="30">
    <source>
    </source>
</evidence>
<evidence type="ECO:0007829" key="31">
    <source>
        <dbReference type="PDB" id="3C3Q"/>
    </source>
</evidence>
<evidence type="ECO:0007829" key="32">
    <source>
        <dbReference type="PDB" id="4ABM"/>
    </source>
</evidence>
<evidence type="ECO:0007829" key="33">
    <source>
        <dbReference type="PDB" id="5MK2"/>
    </source>
</evidence>
<keyword id="KW-0002">3D-structure</keyword>
<keyword id="KW-0007">Acetylation</keyword>
<keyword id="KW-0898">Cataract</keyword>
<keyword id="KW-0175">Coiled coil</keyword>
<keyword id="KW-0963">Cytoplasm</keyword>
<keyword id="KW-0903">Direct protein sequencing</keyword>
<keyword id="KW-0225">Disease variant</keyword>
<keyword id="KW-0967">Endosome</keyword>
<keyword id="KW-0945">Host-virus interaction</keyword>
<keyword id="KW-0472">Membrane</keyword>
<keyword id="KW-0539">Nucleus</keyword>
<keyword id="KW-0597">Phosphoprotein</keyword>
<keyword id="KW-0653">Protein transport</keyword>
<keyword id="KW-1267">Proteomics identification</keyword>
<keyword id="KW-1185">Reference proteome</keyword>
<keyword id="KW-0813">Transport</keyword>
<keyword id="KW-0832">Ubl conjugation</keyword>
<dbReference type="EMBL" id="AB100261">
    <property type="protein sequence ID" value="BAC79375.1"/>
    <property type="molecule type" value="mRNA"/>
</dbReference>
<dbReference type="EMBL" id="AY329085">
    <property type="protein sequence ID" value="AAQ91194.1"/>
    <property type="molecule type" value="mRNA"/>
</dbReference>
<dbReference type="EMBL" id="AL050349">
    <property type="status" value="NOT_ANNOTATED_CDS"/>
    <property type="molecule type" value="Genomic_DNA"/>
</dbReference>
<dbReference type="EMBL" id="CH471077">
    <property type="protein sequence ID" value="EAW76293.1"/>
    <property type="molecule type" value="Genomic_DNA"/>
</dbReference>
<dbReference type="EMBL" id="CH471077">
    <property type="protein sequence ID" value="EAW76294.1"/>
    <property type="molecule type" value="Genomic_DNA"/>
</dbReference>
<dbReference type="EMBL" id="BC033859">
    <property type="protein sequence ID" value="AAH33859.1"/>
    <property type="molecule type" value="mRNA"/>
</dbReference>
<dbReference type="CCDS" id="CCDS13228.1"/>
<dbReference type="RefSeq" id="NP_789782.1">
    <property type="nucleotide sequence ID" value="NM_176812.5"/>
</dbReference>
<dbReference type="PDB" id="3C3Q">
    <property type="method" value="X-ray"/>
    <property type="resolution" value="2.10 A"/>
    <property type="chains" value="B=207-224"/>
</dbReference>
<dbReference type="PDB" id="3UM3">
    <property type="method" value="X-ray"/>
    <property type="resolution" value="3.80 A"/>
    <property type="chains" value="B=121-224"/>
</dbReference>
<dbReference type="PDB" id="4ABM">
    <property type="method" value="X-ray"/>
    <property type="resolution" value="1.80 A"/>
    <property type="chains" value="A/B/C/D=23-97"/>
</dbReference>
<dbReference type="PDB" id="5MK2">
    <property type="method" value="X-ray"/>
    <property type="resolution" value="1.70 A"/>
    <property type="chains" value="C=205-224"/>
</dbReference>
<dbReference type="PDBsum" id="3C3Q"/>
<dbReference type="PDBsum" id="3UM3"/>
<dbReference type="PDBsum" id="4ABM"/>
<dbReference type="PDBsum" id="5MK2"/>
<dbReference type="SMR" id="Q9H444"/>
<dbReference type="BioGRID" id="126170">
    <property type="interactions" value="751"/>
</dbReference>
<dbReference type="ComplexPortal" id="CPX-329">
    <property type="entry name" value="ESCRT-III complex"/>
</dbReference>
<dbReference type="CORUM" id="Q9H444"/>
<dbReference type="DIP" id="DIP-29924N"/>
<dbReference type="FunCoup" id="Q9H444">
    <property type="interactions" value="3084"/>
</dbReference>
<dbReference type="IntAct" id="Q9H444">
    <property type="interactions" value="161"/>
</dbReference>
<dbReference type="MINT" id="Q9H444"/>
<dbReference type="STRING" id="9606.ENSP00000217402"/>
<dbReference type="GlyGen" id="Q9H444">
    <property type="glycosylation" value="2 sites, 1 O-linked glycan (1 site)"/>
</dbReference>
<dbReference type="iPTMnet" id="Q9H444"/>
<dbReference type="MetOSite" id="Q9H444"/>
<dbReference type="PhosphoSitePlus" id="Q9H444"/>
<dbReference type="BioMuta" id="CHMP4B"/>
<dbReference type="DMDM" id="24636296"/>
<dbReference type="jPOST" id="Q9H444"/>
<dbReference type="MassIVE" id="Q9H444"/>
<dbReference type="PaxDb" id="9606-ENSP00000217402"/>
<dbReference type="PeptideAtlas" id="Q9H444"/>
<dbReference type="ProteomicsDB" id="80785"/>
<dbReference type="Pumba" id="Q9H444"/>
<dbReference type="Antibodypedia" id="25737">
    <property type="antibodies" value="176 antibodies from 25 providers"/>
</dbReference>
<dbReference type="DNASU" id="128866"/>
<dbReference type="Ensembl" id="ENST00000217402.3">
    <property type="protein sequence ID" value="ENSP00000217402.2"/>
    <property type="gene ID" value="ENSG00000101421.4"/>
</dbReference>
<dbReference type="GeneID" id="128866"/>
<dbReference type="KEGG" id="hsa:128866"/>
<dbReference type="MANE-Select" id="ENST00000217402.3">
    <property type="protein sequence ID" value="ENSP00000217402.2"/>
    <property type="RefSeq nucleotide sequence ID" value="NM_176812.5"/>
    <property type="RefSeq protein sequence ID" value="NP_789782.1"/>
</dbReference>
<dbReference type="UCSC" id="uc002xaa.4">
    <property type="organism name" value="human"/>
</dbReference>
<dbReference type="AGR" id="HGNC:16171"/>
<dbReference type="CTD" id="128866"/>
<dbReference type="DisGeNET" id="128866"/>
<dbReference type="GeneCards" id="CHMP4B"/>
<dbReference type="HGNC" id="HGNC:16171">
    <property type="gene designation" value="CHMP4B"/>
</dbReference>
<dbReference type="HPA" id="ENSG00000101421">
    <property type="expression patterns" value="Low tissue specificity"/>
</dbReference>
<dbReference type="MalaCards" id="CHMP4B"/>
<dbReference type="MIM" id="605387">
    <property type="type" value="phenotype"/>
</dbReference>
<dbReference type="MIM" id="610897">
    <property type="type" value="gene"/>
</dbReference>
<dbReference type="neXtProt" id="NX_Q9H444"/>
<dbReference type="OpenTargets" id="ENSG00000101421"/>
<dbReference type="Orphanet" id="98993">
    <property type="disease" value="Early-onset posterior polar cataract"/>
</dbReference>
<dbReference type="Orphanet" id="441447">
    <property type="disease" value="Early-onset posterior subcapsular cataract"/>
</dbReference>
<dbReference type="PharmGKB" id="PA25721"/>
<dbReference type="VEuPathDB" id="HostDB:ENSG00000101421"/>
<dbReference type="eggNOG" id="KOG1656">
    <property type="taxonomic scope" value="Eukaryota"/>
</dbReference>
<dbReference type="GeneTree" id="ENSGT00940000154663"/>
<dbReference type="HOGENOM" id="CLU_071097_0_0_1"/>
<dbReference type="InParanoid" id="Q9H444"/>
<dbReference type="OMA" id="MKQIHGG"/>
<dbReference type="OrthoDB" id="5592979at2759"/>
<dbReference type="PAN-GO" id="Q9H444">
    <property type="GO annotations" value="5 GO annotations based on evolutionary models"/>
</dbReference>
<dbReference type="PhylomeDB" id="Q9H444"/>
<dbReference type="TreeFam" id="TF314269"/>
<dbReference type="PathwayCommons" id="Q9H444"/>
<dbReference type="Reactome" id="R-HSA-162588">
    <property type="pathway name" value="Budding and maturation of HIV virion"/>
</dbReference>
<dbReference type="Reactome" id="R-HSA-1632852">
    <property type="pathway name" value="Macroautophagy"/>
</dbReference>
<dbReference type="Reactome" id="R-HSA-5620971">
    <property type="pathway name" value="Pyroptosis"/>
</dbReference>
<dbReference type="Reactome" id="R-HSA-917729">
    <property type="pathway name" value="Endosomal Sorting Complex Required For Transport (ESCRT)"/>
</dbReference>
<dbReference type="Reactome" id="R-HSA-9610379">
    <property type="pathway name" value="HCMV Late Events"/>
</dbReference>
<dbReference type="Reactome" id="R-HSA-9615710">
    <property type="pathway name" value="Late endosomal microautophagy"/>
</dbReference>
<dbReference type="Reactome" id="R-HSA-9668328">
    <property type="pathway name" value="Sealing of the nuclear envelope (NE) by ESCRT-III"/>
</dbReference>
<dbReference type="Reactome" id="R-HSA-9679504">
    <property type="pathway name" value="Translation of Replicase and Assembly of the Replication Transcription Complex"/>
</dbReference>
<dbReference type="Reactome" id="R-HSA-9694676">
    <property type="pathway name" value="Translation of Replicase and Assembly of the Replication Transcription Complex"/>
</dbReference>
<dbReference type="SignaLink" id="Q9H444"/>
<dbReference type="SIGNOR" id="Q9H444"/>
<dbReference type="BioGRID-ORCS" id="128866">
    <property type="hits" value="629 hits in 1167 CRISPR screens"/>
</dbReference>
<dbReference type="CD-CODE" id="FB4E32DD">
    <property type="entry name" value="Presynaptic clusters and postsynaptic densities"/>
</dbReference>
<dbReference type="ChiTaRS" id="CHMP4B">
    <property type="organism name" value="human"/>
</dbReference>
<dbReference type="EvolutionaryTrace" id="Q9H444"/>
<dbReference type="GeneWiki" id="CHMP4B"/>
<dbReference type="GenomeRNAi" id="128866"/>
<dbReference type="Pharos" id="Q9H444">
    <property type="development level" value="Tbio"/>
</dbReference>
<dbReference type="PRO" id="PR:Q9H444"/>
<dbReference type="Proteomes" id="UP000005640">
    <property type="component" value="Chromosome 20"/>
</dbReference>
<dbReference type="RNAct" id="Q9H444">
    <property type="molecule type" value="protein"/>
</dbReference>
<dbReference type="Bgee" id="ENSG00000101421">
    <property type="expression patterns" value="Expressed in ileal mucosa and 184 other cell types or tissues"/>
</dbReference>
<dbReference type="GO" id="GO:1904930">
    <property type="term" value="C:amphisome membrane"/>
    <property type="evidence" value="ECO:0000314"/>
    <property type="project" value="ComplexPortal"/>
</dbReference>
<dbReference type="GO" id="GO:0000421">
    <property type="term" value="C:autophagosome membrane"/>
    <property type="evidence" value="ECO:0000314"/>
    <property type="project" value="ComplexPortal"/>
</dbReference>
<dbReference type="GO" id="GO:0005737">
    <property type="term" value="C:cytoplasm"/>
    <property type="evidence" value="ECO:0000314"/>
    <property type="project" value="UniProtKB"/>
</dbReference>
<dbReference type="GO" id="GO:0009898">
    <property type="term" value="C:cytoplasmic side of plasma membrane"/>
    <property type="evidence" value="ECO:0000314"/>
    <property type="project" value="UniProtKB"/>
</dbReference>
<dbReference type="GO" id="GO:0005829">
    <property type="term" value="C:cytosol"/>
    <property type="evidence" value="ECO:0000304"/>
    <property type="project" value="Reactome"/>
</dbReference>
<dbReference type="GO" id="GO:0005768">
    <property type="term" value="C:endosome"/>
    <property type="evidence" value="ECO:0000314"/>
    <property type="project" value="UniProtKB"/>
</dbReference>
<dbReference type="GO" id="GO:0000815">
    <property type="term" value="C:ESCRT III complex"/>
    <property type="evidence" value="ECO:0000314"/>
    <property type="project" value="UniProtKB"/>
</dbReference>
<dbReference type="GO" id="GO:0070062">
    <property type="term" value="C:extracellular exosome"/>
    <property type="evidence" value="ECO:0007005"/>
    <property type="project" value="UniProtKB"/>
</dbReference>
<dbReference type="GO" id="GO:0000776">
    <property type="term" value="C:kinetochore"/>
    <property type="evidence" value="ECO:0000314"/>
    <property type="project" value="ComplexPortal"/>
</dbReference>
<dbReference type="GO" id="GO:0005828">
    <property type="term" value="C:kinetochore microtubule"/>
    <property type="evidence" value="ECO:0000314"/>
    <property type="project" value="ComplexPortal"/>
</dbReference>
<dbReference type="GO" id="GO:0005765">
    <property type="term" value="C:lysosomal membrane"/>
    <property type="evidence" value="ECO:0000314"/>
    <property type="project" value="ComplexPortal"/>
</dbReference>
<dbReference type="GO" id="GO:0030117">
    <property type="term" value="C:membrane coat"/>
    <property type="evidence" value="ECO:0000314"/>
    <property type="project" value="UniProtKB"/>
</dbReference>
<dbReference type="GO" id="GO:0030496">
    <property type="term" value="C:midbody"/>
    <property type="evidence" value="ECO:0000314"/>
    <property type="project" value="UniProtKB"/>
</dbReference>
<dbReference type="GO" id="GO:0005771">
    <property type="term" value="C:multivesicular body"/>
    <property type="evidence" value="ECO:0000318"/>
    <property type="project" value="GO_Central"/>
</dbReference>
<dbReference type="GO" id="GO:0032585">
    <property type="term" value="C:multivesicular body membrane"/>
    <property type="evidence" value="ECO:0000314"/>
    <property type="project" value="ComplexPortal"/>
</dbReference>
<dbReference type="GO" id="GO:0005635">
    <property type="term" value="C:nuclear envelope"/>
    <property type="evidence" value="ECO:0000314"/>
    <property type="project" value="UniProtKB"/>
</dbReference>
<dbReference type="GO" id="GO:0005643">
    <property type="term" value="C:nuclear pore"/>
    <property type="evidence" value="ECO:0000314"/>
    <property type="project" value="ComplexPortal"/>
</dbReference>
<dbReference type="GO" id="GO:0005634">
    <property type="term" value="C:nucleus"/>
    <property type="evidence" value="ECO:0000314"/>
    <property type="project" value="UniProtKB"/>
</dbReference>
<dbReference type="GO" id="GO:0005886">
    <property type="term" value="C:plasma membrane"/>
    <property type="evidence" value="ECO:0000314"/>
    <property type="project" value="ComplexPortal"/>
</dbReference>
<dbReference type="GO" id="GO:0031982">
    <property type="term" value="C:vesicle"/>
    <property type="evidence" value="ECO:0000314"/>
    <property type="project" value="BHF-UCL"/>
</dbReference>
<dbReference type="GO" id="GO:0045296">
    <property type="term" value="F:cadherin binding"/>
    <property type="evidence" value="ECO:0007005"/>
    <property type="project" value="BHF-UCL"/>
</dbReference>
<dbReference type="GO" id="GO:0042802">
    <property type="term" value="F:identical protein binding"/>
    <property type="evidence" value="ECO:0000353"/>
    <property type="project" value="UniProtKB"/>
</dbReference>
<dbReference type="GO" id="GO:0042803">
    <property type="term" value="F:protein homodimerization activity"/>
    <property type="evidence" value="ECO:0000353"/>
    <property type="project" value="UniProtKB"/>
</dbReference>
<dbReference type="GO" id="GO:0097352">
    <property type="term" value="P:autophagosome maturation"/>
    <property type="evidence" value="ECO:0000315"/>
    <property type="project" value="ComplexPortal"/>
</dbReference>
<dbReference type="GO" id="GO:0006914">
    <property type="term" value="P:autophagy"/>
    <property type="evidence" value="ECO:0000315"/>
    <property type="project" value="ParkinsonsUK-UCL"/>
</dbReference>
<dbReference type="GO" id="GO:0010458">
    <property type="term" value="P:exit from mitosis"/>
    <property type="evidence" value="ECO:0000315"/>
    <property type="project" value="UniProtKB"/>
</dbReference>
<dbReference type="GO" id="GO:1902774">
    <property type="term" value="P:late endosome to lysosome transport"/>
    <property type="evidence" value="ECO:0000315"/>
    <property type="project" value="ComplexPortal"/>
</dbReference>
<dbReference type="GO" id="GO:0032511">
    <property type="term" value="P:late endosome to vacuole transport via multivesicular body sorting pathway"/>
    <property type="evidence" value="ECO:0000318"/>
    <property type="project" value="GO_Central"/>
</dbReference>
<dbReference type="GO" id="GO:0016236">
    <property type="term" value="P:macroautophagy"/>
    <property type="evidence" value="ECO:0000304"/>
    <property type="project" value="ParkinsonsUK-UCL"/>
</dbReference>
<dbReference type="GO" id="GO:0036438">
    <property type="term" value="P:maintenance of lens transparency"/>
    <property type="evidence" value="ECO:0000315"/>
    <property type="project" value="UniProtKB"/>
</dbReference>
<dbReference type="GO" id="GO:0090148">
    <property type="term" value="P:membrane fission"/>
    <property type="evidence" value="ECO:0000315"/>
    <property type="project" value="UniProtKB"/>
</dbReference>
<dbReference type="GO" id="GO:0061952">
    <property type="term" value="P:midbody abscission"/>
    <property type="evidence" value="ECO:0000315"/>
    <property type="project" value="UniProtKB"/>
</dbReference>
<dbReference type="GO" id="GO:0000281">
    <property type="term" value="P:mitotic cytokinesis"/>
    <property type="evidence" value="ECO:0000315"/>
    <property type="project" value="UniProtKB"/>
</dbReference>
<dbReference type="GO" id="GO:0007080">
    <property type="term" value="P:mitotic metaphase chromosome alignment"/>
    <property type="evidence" value="ECO:0000315"/>
    <property type="project" value="UniProtKB"/>
</dbReference>
<dbReference type="GO" id="GO:0036258">
    <property type="term" value="P:multivesicular body assembly"/>
    <property type="evidence" value="ECO:0000304"/>
    <property type="project" value="ParkinsonsUK-UCL"/>
</dbReference>
<dbReference type="GO" id="GO:0071985">
    <property type="term" value="P:multivesicular body sorting pathway"/>
    <property type="evidence" value="ECO:0000314"/>
    <property type="project" value="ComplexPortal"/>
</dbReference>
<dbReference type="GO" id="GO:0061763">
    <property type="term" value="P:multivesicular body-lysosome fusion"/>
    <property type="evidence" value="ECO:0000303"/>
    <property type="project" value="ComplexPortal"/>
</dbReference>
<dbReference type="GO" id="GO:0050877">
    <property type="term" value="P:nervous system process"/>
    <property type="evidence" value="ECO:0000315"/>
    <property type="project" value="UniProtKB"/>
</dbReference>
<dbReference type="GO" id="GO:0031468">
    <property type="term" value="P:nuclear membrane reassembly"/>
    <property type="evidence" value="ECO:0000315"/>
    <property type="project" value="UniProtKB"/>
</dbReference>
<dbReference type="GO" id="GO:0006997">
    <property type="term" value="P:nucleus organization"/>
    <property type="evidence" value="ECO:0000315"/>
    <property type="project" value="UniProtKB"/>
</dbReference>
<dbReference type="GO" id="GO:0001778">
    <property type="term" value="P:plasma membrane repair"/>
    <property type="evidence" value="ECO:0000314"/>
    <property type="project" value="ComplexPortal"/>
</dbReference>
<dbReference type="GO" id="GO:0006620">
    <property type="term" value="P:post-translational protein targeting to endoplasmic reticulum membrane"/>
    <property type="evidence" value="ECO:0000315"/>
    <property type="project" value="UniProtKB"/>
</dbReference>
<dbReference type="GO" id="GO:0051258">
    <property type="term" value="P:protein polymerization"/>
    <property type="evidence" value="ECO:0000314"/>
    <property type="project" value="UniProtKB"/>
</dbReference>
<dbReference type="GO" id="GO:0015031">
    <property type="term" value="P:protein transport"/>
    <property type="evidence" value="ECO:0007669"/>
    <property type="project" value="UniProtKB-KW"/>
</dbReference>
<dbReference type="GO" id="GO:0010824">
    <property type="term" value="P:regulation of centrosome duplication"/>
    <property type="evidence" value="ECO:0000315"/>
    <property type="project" value="UniProtKB"/>
</dbReference>
<dbReference type="GO" id="GO:1901673">
    <property type="term" value="P:regulation of mitotic spindle assembly"/>
    <property type="evidence" value="ECO:0000315"/>
    <property type="project" value="UniProtKB"/>
</dbReference>
<dbReference type="GO" id="GO:0043162">
    <property type="term" value="P:ubiquitin-dependent protein catabolic process via the multivesicular body sorting pathway"/>
    <property type="evidence" value="ECO:0000314"/>
    <property type="project" value="ComplexPortal"/>
</dbReference>
<dbReference type="GO" id="GO:0090611">
    <property type="term" value="P:ubiquitin-independent protein catabolic process via the multivesicular body sorting pathway"/>
    <property type="evidence" value="ECO:0000315"/>
    <property type="project" value="UniProtKB"/>
</dbReference>
<dbReference type="GO" id="GO:0006900">
    <property type="term" value="P:vesicle budding from membrane"/>
    <property type="evidence" value="ECO:0000318"/>
    <property type="project" value="GO_Central"/>
</dbReference>
<dbReference type="GO" id="GO:0051469">
    <property type="term" value="P:vesicle fusion with vacuole"/>
    <property type="evidence" value="ECO:0000303"/>
    <property type="project" value="ComplexPortal"/>
</dbReference>
<dbReference type="GO" id="GO:0046755">
    <property type="term" value="P:viral budding"/>
    <property type="evidence" value="ECO:0000315"/>
    <property type="project" value="UniProtKB"/>
</dbReference>
<dbReference type="GO" id="GO:0046761">
    <property type="term" value="P:viral budding from plasma membrane"/>
    <property type="evidence" value="ECO:0000314"/>
    <property type="project" value="ComplexPortal"/>
</dbReference>
<dbReference type="GO" id="GO:0039702">
    <property type="term" value="P:viral budding via host ESCRT complex"/>
    <property type="evidence" value="ECO:0000314"/>
    <property type="project" value="UniProtKB"/>
</dbReference>
<dbReference type="FunFam" id="1.10.287.1060:FF:000001">
    <property type="entry name" value="Charged multivesicular body protein 4b"/>
    <property type="match status" value="1"/>
</dbReference>
<dbReference type="Gene3D" id="6.10.250.1710">
    <property type="match status" value="1"/>
</dbReference>
<dbReference type="Gene3D" id="1.10.287.1060">
    <property type="entry name" value="ESAT-6-like"/>
    <property type="match status" value="1"/>
</dbReference>
<dbReference type="InterPro" id="IPR005024">
    <property type="entry name" value="Snf7_fam"/>
</dbReference>
<dbReference type="PANTHER" id="PTHR22761">
    <property type="entry name" value="CHARGED MULTIVESICULAR BODY PROTEIN"/>
    <property type="match status" value="1"/>
</dbReference>
<dbReference type="PANTHER" id="PTHR22761:SF4">
    <property type="entry name" value="CHARGED MULTIVESICULAR BODY PROTEIN 4B"/>
    <property type="match status" value="1"/>
</dbReference>
<dbReference type="Pfam" id="PF03357">
    <property type="entry name" value="Snf7"/>
    <property type="match status" value="1"/>
</dbReference>
<protein>
    <recommendedName>
        <fullName>Charged multivesicular body protein 4b</fullName>
    </recommendedName>
    <alternativeName>
        <fullName>Chromatin-modifying protein 4b</fullName>
        <shortName>CHMP4b</shortName>
    </alternativeName>
    <alternativeName>
        <fullName>SNF7 homolog associated with Alix 1</fullName>
    </alternativeName>
    <alternativeName>
        <fullName>SNF7-2</fullName>
        <shortName>hSnf7-2</shortName>
    </alternativeName>
    <alternativeName>
        <fullName>Vacuolar protein sorting-associated protein 32-2</fullName>
        <shortName>Vps32-2</shortName>
        <shortName>hVps32-2</shortName>
    </alternativeName>
</protein>